<feature type="chain" id="PRO_0000186891" description="Uncharacterized protein aq_950">
    <location>
        <begin position="1"/>
        <end position="120"/>
    </location>
</feature>
<sequence>MRSLNFYHVCTGLFESCGYALIMRDCDSITFRIDECPVPLLSIKNAYLKVNEISPEDFVDRIKHSGYLSMLRKGELIKTLECDFNLNLRKKCEKNLEKGDKAILIIHEEKELKFFDIEVL</sequence>
<accession>O67084</accession>
<name>Y950_AQUAE</name>
<keyword id="KW-1185">Reference proteome</keyword>
<dbReference type="EMBL" id="AE000657">
    <property type="protein sequence ID" value="AAC07055.1"/>
    <property type="molecule type" value="Genomic_DNA"/>
</dbReference>
<dbReference type="PIR" id="A70382">
    <property type="entry name" value="A70382"/>
</dbReference>
<dbReference type="RefSeq" id="NP_213647.1">
    <property type="nucleotide sequence ID" value="NC_000918.1"/>
</dbReference>
<dbReference type="EnsemblBacteria" id="AAC07055">
    <property type="protein sequence ID" value="AAC07055"/>
    <property type="gene ID" value="aq_950"/>
</dbReference>
<dbReference type="KEGG" id="aae:aq_950"/>
<dbReference type="HOGENOM" id="CLU_2044826_0_0_0"/>
<dbReference type="InParanoid" id="O67084"/>
<dbReference type="Proteomes" id="UP000000798">
    <property type="component" value="Chromosome"/>
</dbReference>
<protein>
    <recommendedName>
        <fullName>Uncharacterized protein aq_950</fullName>
    </recommendedName>
</protein>
<proteinExistence type="predicted"/>
<reference key="1">
    <citation type="journal article" date="1998" name="Nature">
        <title>The complete genome of the hyperthermophilic bacterium Aquifex aeolicus.</title>
        <authorList>
            <person name="Deckert G."/>
            <person name="Warren P.V."/>
            <person name="Gaasterland T."/>
            <person name="Young W.G."/>
            <person name="Lenox A.L."/>
            <person name="Graham D.E."/>
            <person name="Overbeek R."/>
            <person name="Snead M.A."/>
            <person name="Keller M."/>
            <person name="Aujay M."/>
            <person name="Huber R."/>
            <person name="Feldman R.A."/>
            <person name="Short J.M."/>
            <person name="Olsen G.J."/>
            <person name="Swanson R.V."/>
        </authorList>
    </citation>
    <scope>NUCLEOTIDE SEQUENCE [LARGE SCALE GENOMIC DNA]</scope>
    <source>
        <strain>VF5</strain>
    </source>
</reference>
<gene>
    <name type="ordered locus">aq_950</name>
</gene>
<organism>
    <name type="scientific">Aquifex aeolicus (strain VF5)</name>
    <dbReference type="NCBI Taxonomy" id="224324"/>
    <lineage>
        <taxon>Bacteria</taxon>
        <taxon>Pseudomonadati</taxon>
        <taxon>Aquificota</taxon>
        <taxon>Aquificia</taxon>
        <taxon>Aquificales</taxon>
        <taxon>Aquificaceae</taxon>
        <taxon>Aquifex</taxon>
    </lineage>
</organism>